<name>MOB4_DROME</name>
<sequence>MKMADGSTILRRNRPGTKSKDFCRWPDEPLEEMDSTLAVQQYIQQLIKRDPSNVELILTMPEAQDEGVWKYEHLRQFCMELNGLAVRLQKECSPSTCTQMTATDQWIFLCAAHKTPKECPAIDYTRHTLDGAACLLNSNKYFPSRVSIKESSVTKLGSVCRRVYRIFSHAYFHHRRIFDEFEAETYLCHRFTHFVTKYNLMSKENLIVPINVGENAAPGESEA</sequence>
<organism>
    <name type="scientific">Drosophila melanogaster</name>
    <name type="common">Fruit fly</name>
    <dbReference type="NCBI Taxonomy" id="7227"/>
    <lineage>
        <taxon>Eukaryota</taxon>
        <taxon>Metazoa</taxon>
        <taxon>Ecdysozoa</taxon>
        <taxon>Arthropoda</taxon>
        <taxon>Hexapoda</taxon>
        <taxon>Insecta</taxon>
        <taxon>Pterygota</taxon>
        <taxon>Neoptera</taxon>
        <taxon>Endopterygota</taxon>
        <taxon>Diptera</taxon>
        <taxon>Brachycera</taxon>
        <taxon>Muscomorpha</taxon>
        <taxon>Ephydroidea</taxon>
        <taxon>Drosophilidae</taxon>
        <taxon>Drosophila</taxon>
        <taxon>Sophophora</taxon>
    </lineage>
</organism>
<comment type="similarity">
    <text evidence="2">Belongs to the MOB1/phocein family.</text>
</comment>
<reference evidence="7" key="1">
    <citation type="journal article" date="2000" name="Science">
        <title>The genome sequence of Drosophila melanogaster.</title>
        <authorList>
            <person name="Adams M.D."/>
            <person name="Celniker S.E."/>
            <person name="Holt R.A."/>
            <person name="Evans C.A."/>
            <person name="Gocayne J.D."/>
            <person name="Amanatides P.G."/>
            <person name="Scherer S.E."/>
            <person name="Li P.W."/>
            <person name="Hoskins R.A."/>
            <person name="Galle R.F."/>
            <person name="George R.A."/>
            <person name="Lewis S.E."/>
            <person name="Richards S."/>
            <person name="Ashburner M."/>
            <person name="Henderson S.N."/>
            <person name="Sutton G.G."/>
            <person name="Wortman J.R."/>
            <person name="Yandell M.D."/>
            <person name="Zhang Q."/>
            <person name="Chen L.X."/>
            <person name="Brandon R.C."/>
            <person name="Rogers Y.-H.C."/>
            <person name="Blazej R.G."/>
            <person name="Champe M."/>
            <person name="Pfeiffer B.D."/>
            <person name="Wan K.H."/>
            <person name="Doyle C."/>
            <person name="Baxter E.G."/>
            <person name="Helt G."/>
            <person name="Nelson C.R."/>
            <person name="Miklos G.L.G."/>
            <person name="Abril J.F."/>
            <person name="Agbayani A."/>
            <person name="An H.-J."/>
            <person name="Andrews-Pfannkoch C."/>
            <person name="Baldwin D."/>
            <person name="Ballew R.M."/>
            <person name="Basu A."/>
            <person name="Baxendale J."/>
            <person name="Bayraktaroglu L."/>
            <person name="Beasley E.M."/>
            <person name="Beeson K.Y."/>
            <person name="Benos P.V."/>
            <person name="Berman B.P."/>
            <person name="Bhandari D."/>
            <person name="Bolshakov S."/>
            <person name="Borkova D."/>
            <person name="Botchan M.R."/>
            <person name="Bouck J."/>
            <person name="Brokstein P."/>
            <person name="Brottier P."/>
            <person name="Burtis K.C."/>
            <person name="Busam D.A."/>
            <person name="Butler H."/>
            <person name="Cadieu E."/>
            <person name="Center A."/>
            <person name="Chandra I."/>
            <person name="Cherry J.M."/>
            <person name="Cawley S."/>
            <person name="Dahlke C."/>
            <person name="Davenport L.B."/>
            <person name="Davies P."/>
            <person name="de Pablos B."/>
            <person name="Delcher A."/>
            <person name="Deng Z."/>
            <person name="Mays A.D."/>
            <person name="Dew I."/>
            <person name="Dietz S.M."/>
            <person name="Dodson K."/>
            <person name="Doup L.E."/>
            <person name="Downes M."/>
            <person name="Dugan-Rocha S."/>
            <person name="Dunkov B.C."/>
            <person name="Dunn P."/>
            <person name="Durbin K.J."/>
            <person name="Evangelista C.C."/>
            <person name="Ferraz C."/>
            <person name="Ferriera S."/>
            <person name="Fleischmann W."/>
            <person name="Fosler C."/>
            <person name="Gabrielian A.E."/>
            <person name="Garg N.S."/>
            <person name="Gelbart W.M."/>
            <person name="Glasser K."/>
            <person name="Glodek A."/>
            <person name="Gong F."/>
            <person name="Gorrell J.H."/>
            <person name="Gu Z."/>
            <person name="Guan P."/>
            <person name="Harris M."/>
            <person name="Harris N.L."/>
            <person name="Harvey D.A."/>
            <person name="Heiman T.J."/>
            <person name="Hernandez J.R."/>
            <person name="Houck J."/>
            <person name="Hostin D."/>
            <person name="Houston K.A."/>
            <person name="Howland T.J."/>
            <person name="Wei M.-H."/>
            <person name="Ibegwam C."/>
            <person name="Jalali M."/>
            <person name="Kalush F."/>
            <person name="Karpen G.H."/>
            <person name="Ke Z."/>
            <person name="Kennison J.A."/>
            <person name="Ketchum K.A."/>
            <person name="Kimmel B.E."/>
            <person name="Kodira C.D."/>
            <person name="Kraft C.L."/>
            <person name="Kravitz S."/>
            <person name="Kulp D."/>
            <person name="Lai Z."/>
            <person name="Lasko P."/>
            <person name="Lei Y."/>
            <person name="Levitsky A.A."/>
            <person name="Li J.H."/>
            <person name="Li Z."/>
            <person name="Liang Y."/>
            <person name="Lin X."/>
            <person name="Liu X."/>
            <person name="Mattei B."/>
            <person name="McIntosh T.C."/>
            <person name="McLeod M.P."/>
            <person name="McPherson D."/>
            <person name="Merkulov G."/>
            <person name="Milshina N.V."/>
            <person name="Mobarry C."/>
            <person name="Morris J."/>
            <person name="Moshrefi A."/>
            <person name="Mount S.M."/>
            <person name="Moy M."/>
            <person name="Murphy B."/>
            <person name="Murphy L."/>
            <person name="Muzny D.M."/>
            <person name="Nelson D.L."/>
            <person name="Nelson D.R."/>
            <person name="Nelson K.A."/>
            <person name="Nixon K."/>
            <person name="Nusskern D.R."/>
            <person name="Pacleb J.M."/>
            <person name="Palazzolo M."/>
            <person name="Pittman G.S."/>
            <person name="Pan S."/>
            <person name="Pollard J."/>
            <person name="Puri V."/>
            <person name="Reese M.G."/>
            <person name="Reinert K."/>
            <person name="Remington K."/>
            <person name="Saunders R.D.C."/>
            <person name="Scheeler F."/>
            <person name="Shen H."/>
            <person name="Shue B.C."/>
            <person name="Siden-Kiamos I."/>
            <person name="Simpson M."/>
            <person name="Skupski M.P."/>
            <person name="Smith T.J."/>
            <person name="Spier E."/>
            <person name="Spradling A.C."/>
            <person name="Stapleton M."/>
            <person name="Strong R."/>
            <person name="Sun E."/>
            <person name="Svirskas R."/>
            <person name="Tector C."/>
            <person name="Turner R."/>
            <person name="Venter E."/>
            <person name="Wang A.H."/>
            <person name="Wang X."/>
            <person name="Wang Z.-Y."/>
            <person name="Wassarman D.A."/>
            <person name="Weinstock G.M."/>
            <person name="Weissenbach J."/>
            <person name="Williams S.M."/>
            <person name="Woodage T."/>
            <person name="Worley K.C."/>
            <person name="Wu D."/>
            <person name="Yang S."/>
            <person name="Yao Q.A."/>
            <person name="Ye J."/>
            <person name="Yeh R.-F."/>
            <person name="Zaveri J.S."/>
            <person name="Zhan M."/>
            <person name="Zhang G."/>
            <person name="Zhao Q."/>
            <person name="Zheng L."/>
            <person name="Zheng X.H."/>
            <person name="Zhong F.N."/>
            <person name="Zhong W."/>
            <person name="Zhou X."/>
            <person name="Zhu S.C."/>
            <person name="Zhu X."/>
            <person name="Smith H.O."/>
            <person name="Gibbs R.A."/>
            <person name="Myers E.W."/>
            <person name="Rubin G.M."/>
            <person name="Venter J.C."/>
        </authorList>
    </citation>
    <scope>NUCLEOTIDE SEQUENCE [LARGE SCALE GENOMIC DNA]</scope>
    <source>
        <strain evidence="4">Berkeley</strain>
    </source>
</reference>
<reference evidence="5 7" key="2">
    <citation type="journal article" date="2002" name="Genome Biol.">
        <title>Annotation of the Drosophila melanogaster euchromatic genome: a systematic review.</title>
        <authorList>
            <person name="Misra S."/>
            <person name="Crosby M.A."/>
            <person name="Mungall C.J."/>
            <person name="Matthews B.B."/>
            <person name="Campbell K.S."/>
            <person name="Hradecky P."/>
            <person name="Huang Y."/>
            <person name="Kaminker J.S."/>
            <person name="Millburn G.H."/>
            <person name="Prochnik S.E."/>
            <person name="Smith C.D."/>
            <person name="Tupy J.L."/>
            <person name="Whitfield E.J."/>
            <person name="Bayraktaroglu L."/>
            <person name="Berman B.P."/>
            <person name="Bettencourt B.R."/>
            <person name="Celniker S.E."/>
            <person name="de Grey A.D.N.J."/>
            <person name="Drysdale R.A."/>
            <person name="Harris N.L."/>
            <person name="Richter J."/>
            <person name="Russo S."/>
            <person name="Schroeder A.J."/>
            <person name="Shu S.Q."/>
            <person name="Stapleton M."/>
            <person name="Yamada C."/>
            <person name="Ashburner M."/>
            <person name="Gelbart W.M."/>
            <person name="Rubin G.M."/>
            <person name="Lewis S.E."/>
        </authorList>
    </citation>
    <scope>GENOME REANNOTATION</scope>
    <source>
        <strain>Berkeley</strain>
    </source>
</reference>
<reference evidence="6" key="3">
    <citation type="submission" date="2003-02" db="EMBL/GenBank/DDBJ databases">
        <authorList>
            <person name="Stapleton M."/>
            <person name="Brokstein P."/>
            <person name="Hong L."/>
            <person name="Agbayani A."/>
            <person name="Carlson J.W."/>
            <person name="Champe M."/>
            <person name="Chavez C."/>
            <person name="Dorsett V."/>
            <person name="Dresnek D."/>
            <person name="Farfan D."/>
            <person name="Frise E."/>
            <person name="George R.A."/>
            <person name="Gonzalez M."/>
            <person name="Guarin H."/>
            <person name="Kronmiller B."/>
            <person name="Li P.W."/>
            <person name="Liao G."/>
            <person name="Miranda A."/>
            <person name="Mungall C.J."/>
            <person name="Nunoo J."/>
            <person name="Pacleb J.M."/>
            <person name="Paragas V."/>
            <person name="Park S."/>
            <person name="Patel S."/>
            <person name="Phouanenavong S."/>
            <person name="Wan K.H."/>
            <person name="Yu C."/>
            <person name="Lewis S.E."/>
            <person name="Rubin G.M."/>
            <person name="Celniker S.E."/>
        </authorList>
    </citation>
    <scope>NUCLEOTIDE SEQUENCE [LARGE SCALE MRNA]</scope>
    <source>
        <strain evidence="6">Berkeley</strain>
        <tissue>Embryo</tissue>
    </source>
</reference>
<reference evidence="5" key="4">
    <citation type="journal article" date="2005" name="Mol. Biol. Cell">
        <title>Drosophila Mob family proteins interact with the related tricornered (Trc) and warts (Wts) kinases.</title>
        <authorList>
            <person name="He Y."/>
            <person name="Emoto K."/>
            <person name="Fang X."/>
            <person name="Ren N."/>
            <person name="Tian X."/>
            <person name="Jan Y.-N."/>
            <person name="Adler P.N."/>
        </authorList>
    </citation>
    <scope>IDENTIFICATION</scope>
</reference>
<evidence type="ECO:0000250" key="1">
    <source>
        <dbReference type="UniProtKB" id="Q9H8S9"/>
    </source>
</evidence>
<evidence type="ECO:0000255" key="2"/>
<evidence type="ECO:0000256" key="3">
    <source>
        <dbReference type="SAM" id="MobiDB-lite"/>
    </source>
</evidence>
<evidence type="ECO:0000269" key="4">
    <source>
    </source>
</evidence>
<evidence type="ECO:0000305" key="5"/>
<evidence type="ECO:0000312" key="6">
    <source>
        <dbReference type="EMBL" id="AAL48009.1"/>
    </source>
</evidence>
<evidence type="ECO:0000312" key="7">
    <source>
        <dbReference type="EMBL" id="AAM70816.1"/>
    </source>
</evidence>
<proteinExistence type="evidence at transcript level"/>
<feature type="chain" id="PRO_0000279704" description="MOB kinase activator-like 4">
    <location>
        <begin position="1"/>
        <end position="223"/>
    </location>
</feature>
<feature type="region of interest" description="Disordered" evidence="3">
    <location>
        <begin position="1"/>
        <end position="21"/>
    </location>
</feature>
<feature type="binding site" evidence="1">
    <location>
        <position position="92"/>
    </location>
    <ligand>
        <name>Zn(2+)</name>
        <dbReference type="ChEBI" id="CHEBI:29105"/>
    </ligand>
</feature>
<feature type="binding site" evidence="1">
    <location>
        <position position="97"/>
    </location>
    <ligand>
        <name>Zn(2+)</name>
        <dbReference type="ChEBI" id="CHEBI:29105"/>
    </ligand>
</feature>
<feature type="binding site" evidence="1">
    <location>
        <position position="169"/>
    </location>
    <ligand>
        <name>Zn(2+)</name>
        <dbReference type="ChEBI" id="CHEBI:29105"/>
    </ligand>
</feature>
<feature type="binding site" evidence="1">
    <location>
        <position position="174"/>
    </location>
    <ligand>
        <name>Zn(2+)</name>
        <dbReference type="ChEBI" id="CHEBI:29105"/>
    </ligand>
</feature>
<accession>Q7K0E3</accession>
<dbReference type="EMBL" id="AE013599">
    <property type="protein sequence ID" value="AAM70816.1"/>
    <property type="molecule type" value="Genomic_DNA"/>
</dbReference>
<dbReference type="EMBL" id="AY070538">
    <property type="protein sequence ID" value="AAL48009.1"/>
    <property type="molecule type" value="mRNA"/>
</dbReference>
<dbReference type="RefSeq" id="NP_610229.1">
    <property type="nucleotide sequence ID" value="NM_136385.4"/>
</dbReference>
<dbReference type="SMR" id="Q7K0E3"/>
<dbReference type="BioGRID" id="61474">
    <property type="interactions" value="42"/>
</dbReference>
<dbReference type="ComplexPortal" id="CPX-2237">
    <property type="entry name" value="STRIPAK complex"/>
</dbReference>
<dbReference type="FunCoup" id="Q7K0E3">
    <property type="interactions" value="1022"/>
</dbReference>
<dbReference type="IntAct" id="Q7K0E3">
    <property type="interactions" value="28"/>
</dbReference>
<dbReference type="STRING" id="7227.FBpp0297918"/>
<dbReference type="PaxDb" id="7227-FBpp0297918"/>
<dbReference type="DNASU" id="35576"/>
<dbReference type="EnsemblMetazoa" id="FBtr0086141">
    <property type="protein sequence ID" value="FBpp0085474"/>
    <property type="gene ID" value="FBgn0259483"/>
</dbReference>
<dbReference type="GeneID" id="35576"/>
<dbReference type="KEGG" id="dme:Dmel_CG3403"/>
<dbReference type="AGR" id="FB:FBgn0259483"/>
<dbReference type="CTD" id="25843"/>
<dbReference type="FlyBase" id="FBgn0259483">
    <property type="gene designation" value="Mob4"/>
</dbReference>
<dbReference type="VEuPathDB" id="VectorBase:FBgn0259483"/>
<dbReference type="eggNOG" id="KOG1852">
    <property type="taxonomic scope" value="Eukaryota"/>
</dbReference>
<dbReference type="GeneTree" id="ENSGT01120000271909"/>
<dbReference type="InParanoid" id="Q7K0E3"/>
<dbReference type="OrthoDB" id="184876at2759"/>
<dbReference type="PhylomeDB" id="Q7K0E3"/>
<dbReference type="SignaLink" id="Q7K0E3"/>
<dbReference type="BioGRID-ORCS" id="35576">
    <property type="hits" value="0 hits in 1 CRISPR screen"/>
</dbReference>
<dbReference type="CD-CODE" id="2838EF58">
    <property type="entry name" value="Centrosome"/>
</dbReference>
<dbReference type="ChiTaRS" id="Mob4">
    <property type="organism name" value="fly"/>
</dbReference>
<dbReference type="GenomeRNAi" id="35576"/>
<dbReference type="PRO" id="PR:Q7K0E3"/>
<dbReference type="Proteomes" id="UP000000803">
    <property type="component" value="Chromosome 2R"/>
</dbReference>
<dbReference type="Bgee" id="FBgn0259483">
    <property type="expression patterns" value="Expressed in wing disc and 186 other cell types or tissues"/>
</dbReference>
<dbReference type="ExpressionAtlas" id="Q7K0E3">
    <property type="expression patterns" value="baseline and differential"/>
</dbReference>
<dbReference type="GO" id="GO:0005737">
    <property type="term" value="C:cytoplasm"/>
    <property type="evidence" value="ECO:0000318"/>
    <property type="project" value="GO_Central"/>
</dbReference>
<dbReference type="GO" id="GO:0005829">
    <property type="term" value="C:cytosol"/>
    <property type="evidence" value="ECO:0000314"/>
    <property type="project" value="FlyBase"/>
</dbReference>
<dbReference type="GO" id="GO:0090443">
    <property type="term" value="C:FAR/SIN/STRIPAK complex"/>
    <property type="evidence" value="ECO:0000314"/>
    <property type="project" value="FlyBase"/>
</dbReference>
<dbReference type="GO" id="GO:0043195">
    <property type="term" value="C:terminal bouton"/>
    <property type="evidence" value="ECO:0000314"/>
    <property type="project" value="FlyBase"/>
</dbReference>
<dbReference type="GO" id="GO:0046872">
    <property type="term" value="F:metal ion binding"/>
    <property type="evidence" value="ECO:0007669"/>
    <property type="project" value="UniProtKB-KW"/>
</dbReference>
<dbReference type="GO" id="GO:0008088">
    <property type="term" value="P:axo-dendritic transport"/>
    <property type="evidence" value="ECO:0000315"/>
    <property type="project" value="FlyBase"/>
</dbReference>
<dbReference type="GO" id="GO:0031670">
    <property type="term" value="P:cellular response to nutrient"/>
    <property type="evidence" value="ECO:0000315"/>
    <property type="project" value="FlyBase"/>
</dbReference>
<dbReference type="GO" id="GO:0000226">
    <property type="term" value="P:microtubule cytoskeleton organization"/>
    <property type="evidence" value="ECO:0000315"/>
    <property type="project" value="FlyBase"/>
</dbReference>
<dbReference type="GO" id="GO:0035331">
    <property type="term" value="P:negative regulation of hippo signaling"/>
    <property type="evidence" value="ECO:0000315"/>
    <property type="project" value="FlyBase"/>
</dbReference>
<dbReference type="GO" id="GO:0045886">
    <property type="term" value="P:negative regulation of synaptic assembly at neuromuscular junction"/>
    <property type="evidence" value="ECO:0000315"/>
    <property type="project" value="FlyBase"/>
</dbReference>
<dbReference type="GO" id="GO:0048812">
    <property type="term" value="P:neuron projection morphogenesis"/>
    <property type="evidence" value="ECO:0000315"/>
    <property type="project" value="FlyBase"/>
</dbReference>
<dbReference type="GO" id="GO:0046628">
    <property type="term" value="P:positive regulation of insulin receptor signaling pathway"/>
    <property type="evidence" value="ECO:0000315"/>
    <property type="project" value="FlyBase"/>
</dbReference>
<dbReference type="GO" id="GO:0002052">
    <property type="term" value="P:positive regulation of neuroblast proliferation"/>
    <property type="evidence" value="ECO:0000315"/>
    <property type="project" value="FlyBase"/>
</dbReference>
<dbReference type="GO" id="GO:0046579">
    <property type="term" value="P:positive regulation of Ras protein signal transduction"/>
    <property type="evidence" value="ECO:0007003"/>
    <property type="project" value="FlyBase"/>
</dbReference>
<dbReference type="FunFam" id="1.20.140.30:FF:000002">
    <property type="entry name" value="MOB-like protein phocein isoform X1"/>
    <property type="match status" value="1"/>
</dbReference>
<dbReference type="Gene3D" id="1.20.140.30">
    <property type="entry name" value="MOB kinase activator"/>
    <property type="match status" value="1"/>
</dbReference>
<dbReference type="InterPro" id="IPR005301">
    <property type="entry name" value="MOB_kinase_act_fam"/>
</dbReference>
<dbReference type="InterPro" id="IPR036703">
    <property type="entry name" value="MOB_kinase_act_sf"/>
</dbReference>
<dbReference type="PANTHER" id="PTHR22599">
    <property type="entry name" value="MPS ONE BINDER KINASE ACTIVATOR-LIKE MOB"/>
    <property type="match status" value="1"/>
</dbReference>
<dbReference type="Pfam" id="PF03637">
    <property type="entry name" value="Mob1_phocein"/>
    <property type="match status" value="1"/>
</dbReference>
<dbReference type="SMART" id="SM01388">
    <property type="entry name" value="Mob1_phocein"/>
    <property type="match status" value="1"/>
</dbReference>
<dbReference type="SUPFAM" id="SSF101152">
    <property type="entry name" value="Mob1/phocein"/>
    <property type="match status" value="1"/>
</dbReference>
<protein>
    <recommendedName>
        <fullName>MOB kinase activator-like 4</fullName>
    </recommendedName>
    <alternativeName>
        <fullName>Mob as tumor suppressor protein 4</fullName>
        <shortName>Dmob4</shortName>
    </alternativeName>
    <alternativeName>
        <fullName>Mps one binder kinase activator-like 4</fullName>
    </alternativeName>
</protein>
<gene>
    <name type="primary">Mob4</name>
    <name type="ORF">CG3403</name>
</gene>
<keyword id="KW-0479">Metal-binding</keyword>
<keyword id="KW-1185">Reference proteome</keyword>
<keyword id="KW-0862">Zinc</keyword>